<name>OR9G9_HUMAN</name>
<accession>P0C7N8</accession>
<comment type="function">
    <text evidence="3">Odorant receptor.</text>
</comment>
<comment type="subcellular location">
    <subcellularLocation>
        <location>Cell membrane</location>
        <topology>Multi-pass membrane protein</topology>
    </subcellularLocation>
</comment>
<comment type="similarity">
    <text evidence="2">Belongs to the G-protein coupled receptor 1 family.</text>
</comment>
<evidence type="ECO:0000255" key="1"/>
<evidence type="ECO:0000255" key="2">
    <source>
        <dbReference type="PROSITE-ProRule" id="PRU00521"/>
    </source>
</evidence>
<evidence type="ECO:0000305" key="3"/>
<keyword id="KW-1003">Cell membrane</keyword>
<keyword id="KW-1015">Disulfide bond</keyword>
<keyword id="KW-0297">G-protein coupled receptor</keyword>
<keyword id="KW-0325">Glycoprotein</keyword>
<keyword id="KW-0472">Membrane</keyword>
<keyword id="KW-0552">Olfaction</keyword>
<keyword id="KW-0675">Receptor</keyword>
<keyword id="KW-1185">Reference proteome</keyword>
<keyword id="KW-0716">Sensory transduction</keyword>
<keyword id="KW-0807">Transducer</keyword>
<keyword id="KW-0812">Transmembrane</keyword>
<keyword id="KW-1133">Transmembrane helix</keyword>
<reference key="1">
    <citation type="submission" date="2005-07" db="EMBL/GenBank/DDBJ databases">
        <authorList>
            <person name="Mural R.J."/>
            <person name="Istrail S."/>
            <person name="Sutton G.G."/>
            <person name="Florea L."/>
            <person name="Halpern A.L."/>
            <person name="Mobarry C.M."/>
            <person name="Lippert R."/>
            <person name="Walenz B."/>
            <person name="Shatkay H."/>
            <person name="Dew I."/>
            <person name="Miller J.R."/>
            <person name="Flanigan M.J."/>
            <person name="Edwards N.J."/>
            <person name="Bolanos R."/>
            <person name="Fasulo D."/>
            <person name="Halldorsson B.V."/>
            <person name="Hannenhalli S."/>
            <person name="Turner R."/>
            <person name="Yooseph S."/>
            <person name="Lu F."/>
            <person name="Nusskern D.R."/>
            <person name="Shue B.C."/>
            <person name="Zheng X.H."/>
            <person name="Zhong F."/>
            <person name="Delcher A.L."/>
            <person name="Huson D.H."/>
            <person name="Kravitz S.A."/>
            <person name="Mouchard L."/>
            <person name="Reinert K."/>
            <person name="Remington K.A."/>
            <person name="Clark A.G."/>
            <person name="Waterman M.S."/>
            <person name="Eichler E.E."/>
            <person name="Adams M.D."/>
            <person name="Hunkapiller M.W."/>
            <person name="Myers E.W."/>
            <person name="Venter J.C."/>
        </authorList>
    </citation>
    <scope>NUCLEOTIDE SEQUENCE [LARGE SCALE GENOMIC DNA]</scope>
</reference>
<proteinExistence type="inferred from homology"/>
<organism>
    <name type="scientific">Homo sapiens</name>
    <name type="common">Human</name>
    <dbReference type="NCBI Taxonomy" id="9606"/>
    <lineage>
        <taxon>Eukaryota</taxon>
        <taxon>Metazoa</taxon>
        <taxon>Chordata</taxon>
        <taxon>Craniata</taxon>
        <taxon>Vertebrata</taxon>
        <taxon>Euteleostomi</taxon>
        <taxon>Mammalia</taxon>
        <taxon>Eutheria</taxon>
        <taxon>Euarchontoglires</taxon>
        <taxon>Primates</taxon>
        <taxon>Haplorrhini</taxon>
        <taxon>Catarrhini</taxon>
        <taxon>Hominidae</taxon>
        <taxon>Homo</taxon>
    </lineage>
</organism>
<feature type="chain" id="PRO_0000341323" description="Olfactory receptor 9G9">
    <location>
        <begin position="1"/>
        <end position="305"/>
    </location>
</feature>
<feature type="topological domain" description="Extracellular" evidence="1">
    <location>
        <begin position="1"/>
        <end position="27"/>
    </location>
</feature>
<feature type="transmembrane region" description="Helical; Name=1" evidence="1">
    <location>
        <begin position="28"/>
        <end position="48"/>
    </location>
</feature>
<feature type="topological domain" description="Cytoplasmic" evidence="1">
    <location>
        <begin position="49"/>
        <end position="64"/>
    </location>
</feature>
<feature type="transmembrane region" description="Helical; Name=2" evidence="1">
    <location>
        <begin position="65"/>
        <end position="85"/>
    </location>
</feature>
<feature type="topological domain" description="Extracellular" evidence="1">
    <location>
        <begin position="86"/>
        <end position="96"/>
    </location>
</feature>
<feature type="transmembrane region" description="Helical; Name=3" evidence="1">
    <location>
        <begin position="97"/>
        <end position="117"/>
    </location>
</feature>
<feature type="topological domain" description="Cytoplasmic" evidence="1">
    <location>
        <begin position="118"/>
        <end position="138"/>
    </location>
</feature>
<feature type="transmembrane region" description="Helical; Name=4" evidence="1">
    <location>
        <begin position="139"/>
        <end position="159"/>
    </location>
</feature>
<feature type="topological domain" description="Extracellular" evidence="1">
    <location>
        <begin position="160"/>
        <end position="200"/>
    </location>
</feature>
<feature type="transmembrane region" description="Helical; Name=5" evidence="1">
    <location>
        <begin position="201"/>
        <end position="221"/>
    </location>
</feature>
<feature type="topological domain" description="Cytoplasmic" evidence="1">
    <location>
        <begin position="222"/>
        <end position="239"/>
    </location>
</feature>
<feature type="transmembrane region" description="Helical; Name=6" evidence="1">
    <location>
        <begin position="240"/>
        <end position="260"/>
    </location>
</feature>
<feature type="topological domain" description="Extracellular" evidence="1">
    <location>
        <begin position="261"/>
        <end position="271"/>
    </location>
</feature>
<feature type="transmembrane region" description="Helical; Name=7" evidence="1">
    <location>
        <begin position="272"/>
        <end position="291"/>
    </location>
</feature>
<feature type="topological domain" description="Cytoplasmic" evidence="1">
    <location>
        <begin position="292"/>
        <end position="305"/>
    </location>
</feature>
<feature type="glycosylation site" description="N-linked (GlcNAc...) asparagine" evidence="1">
    <location>
        <position position="5"/>
    </location>
</feature>
<feature type="disulfide bond" evidence="2">
    <location>
        <begin position="96"/>
        <end position="178"/>
    </location>
</feature>
<dbReference type="EMBL" id="CH471076">
    <property type="protein sequence ID" value="EAW73723.1"/>
    <property type="molecule type" value="Genomic_DNA"/>
</dbReference>
<dbReference type="SMR" id="P0C7N8"/>
<dbReference type="GlyCosmos" id="P0C7N8">
    <property type="glycosylation" value="1 site, No reported glycans"/>
</dbReference>
<dbReference type="GlyGen" id="P0C7N8">
    <property type="glycosylation" value="1 site"/>
</dbReference>
<dbReference type="iPTMnet" id="P0C7N8"/>
<dbReference type="PhosphoSitePlus" id="P0C7N8"/>
<dbReference type="BioMuta" id="OR9G9"/>
<dbReference type="DMDM" id="190359933"/>
<dbReference type="MassIVE" id="P0C7N8"/>
<dbReference type="AGR" id="HGNC:31940"/>
<dbReference type="GeneCards" id="OR9G9"/>
<dbReference type="HGNC" id="HGNC:31940">
    <property type="gene designation" value="OR9G9"/>
</dbReference>
<dbReference type="neXtProt" id="NX_P0C7N8"/>
<dbReference type="PharmGKB" id="PA142671224"/>
<dbReference type="InParanoid" id="P0C7N8"/>
<dbReference type="PAN-GO" id="P0C7N8">
    <property type="GO annotations" value="0 GO annotations based on evolutionary models"/>
</dbReference>
<dbReference type="PhylomeDB" id="P0C7N8"/>
<dbReference type="PathwayCommons" id="P0C7N8"/>
<dbReference type="Reactome" id="R-HSA-9752946">
    <property type="pathway name" value="Expression and translocation of olfactory receptors"/>
</dbReference>
<dbReference type="Pharos" id="P0C7N8">
    <property type="development level" value="Tdark"/>
</dbReference>
<dbReference type="PRO" id="PR:P0C7N8"/>
<dbReference type="Proteomes" id="UP000005640">
    <property type="component" value="Unplaced"/>
</dbReference>
<dbReference type="RNAct" id="P0C7N8">
    <property type="molecule type" value="protein"/>
</dbReference>
<dbReference type="GO" id="GO:0005886">
    <property type="term" value="C:plasma membrane"/>
    <property type="evidence" value="ECO:0007669"/>
    <property type="project" value="UniProtKB-SubCell"/>
</dbReference>
<dbReference type="GO" id="GO:0004930">
    <property type="term" value="F:G protein-coupled receptor activity"/>
    <property type="evidence" value="ECO:0007669"/>
    <property type="project" value="UniProtKB-KW"/>
</dbReference>
<dbReference type="GO" id="GO:0004984">
    <property type="term" value="F:olfactory receptor activity"/>
    <property type="evidence" value="ECO:0007669"/>
    <property type="project" value="InterPro"/>
</dbReference>
<dbReference type="CDD" id="cd15418">
    <property type="entry name" value="7tmA_OR9G-like"/>
    <property type="match status" value="1"/>
</dbReference>
<dbReference type="FunFam" id="1.20.1070.10:FF:000003">
    <property type="entry name" value="Olfactory receptor"/>
    <property type="match status" value="1"/>
</dbReference>
<dbReference type="Gene3D" id="1.20.1070.10">
    <property type="entry name" value="Rhodopsin 7-helix transmembrane proteins"/>
    <property type="match status" value="1"/>
</dbReference>
<dbReference type="InterPro" id="IPR000276">
    <property type="entry name" value="GPCR_Rhodpsn"/>
</dbReference>
<dbReference type="InterPro" id="IPR017452">
    <property type="entry name" value="GPCR_Rhodpsn_7TM"/>
</dbReference>
<dbReference type="InterPro" id="IPR000725">
    <property type="entry name" value="Olfact_rcpt"/>
</dbReference>
<dbReference type="PANTHER" id="PTHR48018">
    <property type="entry name" value="OLFACTORY RECEPTOR"/>
    <property type="match status" value="1"/>
</dbReference>
<dbReference type="Pfam" id="PF13853">
    <property type="entry name" value="7tm_4"/>
    <property type="match status" value="1"/>
</dbReference>
<dbReference type="PRINTS" id="PR00237">
    <property type="entry name" value="GPCRRHODOPSN"/>
</dbReference>
<dbReference type="PRINTS" id="PR00245">
    <property type="entry name" value="OLFACTORYR"/>
</dbReference>
<dbReference type="SUPFAM" id="SSF81321">
    <property type="entry name" value="Family A G protein-coupled receptor-like"/>
    <property type="match status" value="1"/>
</dbReference>
<dbReference type="PROSITE" id="PS00237">
    <property type="entry name" value="G_PROTEIN_RECEP_F1_1"/>
    <property type="match status" value="1"/>
</dbReference>
<dbReference type="PROSITE" id="PS50262">
    <property type="entry name" value="G_PROTEIN_RECEP_F1_2"/>
    <property type="match status" value="1"/>
</dbReference>
<gene>
    <name type="primary">OR9G9</name>
</gene>
<sequence length="305" mass="34020">MQRSNHTVTEFILLGFTTDPGMQLGLFVVFLGVYSLTVVGNSTLIVLICNDSHLHTPMYFVVGNLSFLDLWYSSVYTPKILVICISEDKSISFAGCLCQFFFSAGLAYSECCLLAAMAYDRYVAISKPLLYAQAMSIKLCALLVAVSYCGGFINSSIITKKTFSFNFCCENIIDDFFCDLLPLVKLACGEKGCYKFLMYFLLASNVICPAVLILASYLFIITSVLRISSSQGRLKAFSTCSSHLTSVTLYYGSILYIYALPRSSYSFDMDKIVSTFYTEVLPMLNPMIYSLRNKDVKEALKKLLP</sequence>
<protein>
    <recommendedName>
        <fullName>Olfactory receptor 9G9</fullName>
    </recommendedName>
</protein>